<sequence length="395" mass="44534">MDVLFSIAKTVSELKKRVVVGTIYTNVEDIIQQTNELIRTLNGSTFHTGGIGTQPQKDWVVQLPQLGTTLLNLDDNYVQSARGIIDYLASFIEAVCDDEMVREASRNGMQPQSPTLIALASSKFKTINFNNSSQSIKNWSAQSRRENPVYEYKNPMVFEYRNSYILHRADQQFGNAMGLRYYTTSNTCQIAAFDSTMAENAPNNTQRFIYHGRLKRPISNVLMKVERGAPNVNNPTILPDPTNQTTWLFNPVQVMNGTFTIEFYNNGQLVDMVRNMGIATVRTFDSYRITIDMIRPAAMTQYVQQLFPVGGPYSHQAAYMLTLSVLDATTESVLCDSHSVDYSIVANTRRDSAMPAGTVFQPGFPWEQTLSNYTVAQEDNLERLLLVASVKRMVM</sequence>
<organismHost>
    <name type="scientific">Bos taurus</name>
    <name type="common">Bovine</name>
    <dbReference type="NCBI Taxonomy" id="9913"/>
</organismHost>
<reference key="1">
    <citation type="journal article" date="1992" name="Virology">
        <title>Nucleotide sequence of gene 5 encoding the inner capsid protein (VP6) of bovine group C rotavirus: comparison with corresponding genes of group C, A, and B rotaviruses.</title>
        <authorList>
            <person name="Jiang B."/>
            <person name="Tsunemitsu H."/>
            <person name="Gentsch J.R."/>
            <person name="Glass R.I."/>
            <person name="Green K.Y."/>
            <person name="Qian Y.A."/>
            <person name="Saif L.J."/>
        </authorList>
    </citation>
    <scope>NUCLEOTIDE SEQUENCE [MRNA]</scope>
</reference>
<name>VP6_ROTBS</name>
<organism>
    <name type="scientific">Rotavirus C (isolate RVC/Cow/Japan/Shintoku/1991/G2P[3])</name>
    <name type="common">RV-C</name>
    <dbReference type="NCBI Taxonomy" id="33723"/>
    <lineage>
        <taxon>Viruses</taxon>
        <taxon>Riboviria</taxon>
        <taxon>Orthornavirae</taxon>
        <taxon>Duplornaviricota</taxon>
        <taxon>Resentoviricetes</taxon>
        <taxon>Reovirales</taxon>
        <taxon>Sedoreoviridae</taxon>
        <taxon>Rotavirus</taxon>
        <taxon>Rotavirus C</taxon>
    </lineage>
</organism>
<protein>
    <recommendedName>
        <fullName evidence="1">Intermediate capsid protein VP6</fullName>
    </recommendedName>
</protein>
<evidence type="ECO:0000255" key="1">
    <source>
        <dbReference type="HAMAP-Rule" id="MF_04126"/>
    </source>
</evidence>
<proteinExistence type="evidence at transcript level"/>
<feature type="chain" id="PRO_0000149563" description="Intermediate capsid protein VP6">
    <location>
        <begin position="1"/>
        <end position="395"/>
    </location>
</feature>
<keyword id="KW-0167">Capsid protein</keyword>
<keyword id="KW-1154">Intermediate capsid protein</keyword>
<keyword id="KW-0946">Virion</keyword>
<comment type="function">
    <text evidence="1">Intermediate capsid protein that self assembles to form an icosahedral capsid with a T=13 symmetry, which consists of 230 trimers of VP6, with channels at each of its five-fold vertices. This capsid constitutes the middle concentric layer of the viral mature particle. The innermost VP2 capsid and the intermediate VP6 capsid remain intact following cell entry to protect the dsRNA from degradation and to prevent unfavorable antiviral responses in the host cell during all the replication cycle of the virus. Nascent transcripts are transcribed within the structural confines of this double-layered particle (DLP) and are extruded through the channels at the five-fold axes. VP6 is required for the transcription activity of the DLP.</text>
</comment>
<comment type="subunit">
    <text evidence="1">Homotrimer. Interacts with the inner capsid protein VP2. Interacts with the outer capsid glycoprotein VP7.</text>
</comment>
<comment type="subcellular location">
    <subcellularLocation>
        <location evidence="1">Virion</location>
    </subcellularLocation>
    <text evidence="1">Component of the intermediate capsid. Also found in spherical cytoplasmic structures, called virus factories, that appear early after infection and are the site of viral replication and packaging.</text>
</comment>
<comment type="similarity">
    <text evidence="1">Belongs to the rotavirus VP6 family.</text>
</comment>
<accession>Q00734</accession>
<dbReference type="EMBL" id="M88768">
    <property type="protein sequence ID" value="AAA03235.1"/>
    <property type="molecule type" value="mRNA"/>
</dbReference>
<dbReference type="PIR" id="A43386">
    <property type="entry name" value="A43386"/>
</dbReference>
<dbReference type="SMR" id="Q00734"/>
<dbReference type="GO" id="GO:0019031">
    <property type="term" value="C:viral envelope"/>
    <property type="evidence" value="ECO:0007669"/>
    <property type="project" value="UniProtKB-UniRule"/>
</dbReference>
<dbReference type="GO" id="GO:0039626">
    <property type="term" value="C:viral intermediate capsid"/>
    <property type="evidence" value="ECO:0007669"/>
    <property type="project" value="UniProtKB-UniRule"/>
</dbReference>
<dbReference type="GO" id="GO:0046789">
    <property type="term" value="F:host cell surface receptor binding"/>
    <property type="evidence" value="ECO:0007669"/>
    <property type="project" value="UniProtKB-UniRule"/>
</dbReference>
<dbReference type="GO" id="GO:0005198">
    <property type="term" value="F:structural molecule activity"/>
    <property type="evidence" value="ECO:0007669"/>
    <property type="project" value="UniProtKB-UniRule"/>
</dbReference>
<dbReference type="GO" id="GO:0019064">
    <property type="term" value="P:fusion of virus membrane with host plasma membrane"/>
    <property type="evidence" value="ECO:0007669"/>
    <property type="project" value="UniProtKB-UniRule"/>
</dbReference>
<dbReference type="Gene3D" id="2.60.120.170">
    <property type="match status" value="1"/>
</dbReference>
<dbReference type="Gene3D" id="1.10.1350.10">
    <property type="entry name" value="Viral capsid alpha domain"/>
    <property type="match status" value="1"/>
</dbReference>
<dbReference type="HAMAP" id="MF_04126">
    <property type="entry name" value="Rota_VP6"/>
    <property type="match status" value="1"/>
</dbReference>
<dbReference type="InterPro" id="IPR008980">
    <property type="entry name" value="Capsid_hemagglutn"/>
</dbReference>
<dbReference type="InterPro" id="IPR001385">
    <property type="entry name" value="Rotavirus_A/C_VP6"/>
</dbReference>
<dbReference type="InterPro" id="IPR008935">
    <property type="entry name" value="Virus_capsid_a-hlx_vir"/>
</dbReference>
<dbReference type="Pfam" id="PF00980">
    <property type="entry name" value="Rota_Capsid_VP6"/>
    <property type="match status" value="1"/>
</dbReference>
<dbReference type="SUPFAM" id="SSF48345">
    <property type="entry name" value="A virus capsid protein alpha-helical domain"/>
    <property type="match status" value="1"/>
</dbReference>
<dbReference type="SUPFAM" id="SSF49818">
    <property type="entry name" value="Viral protein domain"/>
    <property type="match status" value="1"/>
</dbReference>